<dbReference type="EMBL" id="CP000736">
    <property type="protein sequence ID" value="ABR50869.1"/>
    <property type="molecule type" value="Genomic_DNA"/>
</dbReference>
<dbReference type="SMR" id="A6TXF1"/>
<dbReference type="KEGG" id="sah:SaurJH1_0001"/>
<dbReference type="HOGENOM" id="CLU_026910_3_1_9"/>
<dbReference type="GO" id="GO:0005737">
    <property type="term" value="C:cytoplasm"/>
    <property type="evidence" value="ECO:0007669"/>
    <property type="project" value="UniProtKB-SubCell"/>
</dbReference>
<dbReference type="GO" id="GO:0005886">
    <property type="term" value="C:plasma membrane"/>
    <property type="evidence" value="ECO:0007669"/>
    <property type="project" value="TreeGrafter"/>
</dbReference>
<dbReference type="GO" id="GO:0005524">
    <property type="term" value="F:ATP binding"/>
    <property type="evidence" value="ECO:0007669"/>
    <property type="project" value="UniProtKB-UniRule"/>
</dbReference>
<dbReference type="GO" id="GO:0016887">
    <property type="term" value="F:ATP hydrolysis activity"/>
    <property type="evidence" value="ECO:0007669"/>
    <property type="project" value="InterPro"/>
</dbReference>
<dbReference type="GO" id="GO:0003688">
    <property type="term" value="F:DNA replication origin binding"/>
    <property type="evidence" value="ECO:0007669"/>
    <property type="project" value="UniProtKB-UniRule"/>
</dbReference>
<dbReference type="GO" id="GO:0008289">
    <property type="term" value="F:lipid binding"/>
    <property type="evidence" value="ECO:0007669"/>
    <property type="project" value="UniProtKB-KW"/>
</dbReference>
<dbReference type="GO" id="GO:0006270">
    <property type="term" value="P:DNA replication initiation"/>
    <property type="evidence" value="ECO:0007669"/>
    <property type="project" value="UniProtKB-UniRule"/>
</dbReference>
<dbReference type="GO" id="GO:0006275">
    <property type="term" value="P:regulation of DNA replication"/>
    <property type="evidence" value="ECO:0007669"/>
    <property type="project" value="UniProtKB-UniRule"/>
</dbReference>
<dbReference type="CDD" id="cd00009">
    <property type="entry name" value="AAA"/>
    <property type="match status" value="1"/>
</dbReference>
<dbReference type="CDD" id="cd06571">
    <property type="entry name" value="Bac_DnaA_C"/>
    <property type="match status" value="1"/>
</dbReference>
<dbReference type="FunFam" id="1.10.1750.10:FF:000003">
    <property type="entry name" value="Chromosomal replication initiator protein DnaA"/>
    <property type="match status" value="1"/>
</dbReference>
<dbReference type="FunFam" id="1.10.8.60:FF:000003">
    <property type="entry name" value="Chromosomal replication initiator protein DnaA"/>
    <property type="match status" value="1"/>
</dbReference>
<dbReference type="FunFam" id="3.40.50.300:FF:000150">
    <property type="entry name" value="Chromosomal replication initiator protein DnaA"/>
    <property type="match status" value="1"/>
</dbReference>
<dbReference type="Gene3D" id="1.10.1750.10">
    <property type="match status" value="1"/>
</dbReference>
<dbReference type="Gene3D" id="1.10.8.60">
    <property type="match status" value="1"/>
</dbReference>
<dbReference type="Gene3D" id="3.30.300.180">
    <property type="match status" value="1"/>
</dbReference>
<dbReference type="Gene3D" id="3.40.50.300">
    <property type="entry name" value="P-loop containing nucleotide triphosphate hydrolases"/>
    <property type="match status" value="1"/>
</dbReference>
<dbReference type="HAMAP" id="MF_00377">
    <property type="entry name" value="DnaA_bact"/>
    <property type="match status" value="1"/>
</dbReference>
<dbReference type="InterPro" id="IPR003593">
    <property type="entry name" value="AAA+_ATPase"/>
</dbReference>
<dbReference type="InterPro" id="IPR001957">
    <property type="entry name" value="Chromosome_initiator_DnaA"/>
</dbReference>
<dbReference type="InterPro" id="IPR020591">
    <property type="entry name" value="Chromosome_initiator_DnaA-like"/>
</dbReference>
<dbReference type="InterPro" id="IPR018312">
    <property type="entry name" value="Chromosome_initiator_DnaA_CS"/>
</dbReference>
<dbReference type="InterPro" id="IPR013159">
    <property type="entry name" value="DnaA_C"/>
</dbReference>
<dbReference type="InterPro" id="IPR013317">
    <property type="entry name" value="DnaA_dom"/>
</dbReference>
<dbReference type="InterPro" id="IPR024633">
    <property type="entry name" value="DnaA_N_dom"/>
</dbReference>
<dbReference type="InterPro" id="IPR038454">
    <property type="entry name" value="DnaA_N_sf"/>
</dbReference>
<dbReference type="InterPro" id="IPR027417">
    <property type="entry name" value="P-loop_NTPase"/>
</dbReference>
<dbReference type="InterPro" id="IPR010921">
    <property type="entry name" value="Trp_repressor/repl_initiator"/>
</dbReference>
<dbReference type="NCBIfam" id="TIGR00362">
    <property type="entry name" value="DnaA"/>
    <property type="match status" value="1"/>
</dbReference>
<dbReference type="PANTHER" id="PTHR30050">
    <property type="entry name" value="CHROMOSOMAL REPLICATION INITIATOR PROTEIN DNAA"/>
    <property type="match status" value="1"/>
</dbReference>
<dbReference type="PANTHER" id="PTHR30050:SF2">
    <property type="entry name" value="CHROMOSOMAL REPLICATION INITIATOR PROTEIN DNAA"/>
    <property type="match status" value="1"/>
</dbReference>
<dbReference type="Pfam" id="PF00308">
    <property type="entry name" value="Bac_DnaA"/>
    <property type="match status" value="1"/>
</dbReference>
<dbReference type="Pfam" id="PF08299">
    <property type="entry name" value="Bac_DnaA_C"/>
    <property type="match status" value="1"/>
</dbReference>
<dbReference type="Pfam" id="PF11638">
    <property type="entry name" value="DnaA_N"/>
    <property type="match status" value="1"/>
</dbReference>
<dbReference type="PRINTS" id="PR00051">
    <property type="entry name" value="DNAA"/>
</dbReference>
<dbReference type="SMART" id="SM00382">
    <property type="entry name" value="AAA"/>
    <property type="match status" value="1"/>
</dbReference>
<dbReference type="SMART" id="SM00760">
    <property type="entry name" value="Bac_DnaA_C"/>
    <property type="match status" value="1"/>
</dbReference>
<dbReference type="SUPFAM" id="SSF52540">
    <property type="entry name" value="P-loop containing nucleoside triphosphate hydrolases"/>
    <property type="match status" value="1"/>
</dbReference>
<dbReference type="SUPFAM" id="SSF48295">
    <property type="entry name" value="TrpR-like"/>
    <property type="match status" value="1"/>
</dbReference>
<dbReference type="PROSITE" id="PS01008">
    <property type="entry name" value="DNAA"/>
    <property type="match status" value="1"/>
</dbReference>
<evidence type="ECO:0000255" key="1">
    <source>
        <dbReference type="HAMAP-Rule" id="MF_00377"/>
    </source>
</evidence>
<reference key="1">
    <citation type="submission" date="2007-06" db="EMBL/GenBank/DDBJ databases">
        <title>Complete sequence of chromosome of Staphylococcus aureus subsp. aureus JH1.</title>
        <authorList>
            <consortium name="US DOE Joint Genome Institute"/>
            <person name="Copeland A."/>
            <person name="Lucas S."/>
            <person name="Lapidus A."/>
            <person name="Barry K."/>
            <person name="Detter J.C."/>
            <person name="Glavina del Rio T."/>
            <person name="Hammon N."/>
            <person name="Israni S."/>
            <person name="Dalin E."/>
            <person name="Tice H."/>
            <person name="Pitluck S."/>
            <person name="Chain P."/>
            <person name="Malfatti S."/>
            <person name="Shin M."/>
            <person name="Vergez L."/>
            <person name="Schmutz J."/>
            <person name="Larimer F."/>
            <person name="Land M."/>
            <person name="Hauser L."/>
            <person name="Kyrpides N."/>
            <person name="Ivanova N."/>
            <person name="Tomasz A."/>
            <person name="Richardson P."/>
        </authorList>
    </citation>
    <scope>NUCLEOTIDE SEQUENCE [LARGE SCALE GENOMIC DNA]</scope>
    <source>
        <strain>JH1</strain>
    </source>
</reference>
<keyword id="KW-0067">ATP-binding</keyword>
<keyword id="KW-0963">Cytoplasm</keyword>
<keyword id="KW-0235">DNA replication</keyword>
<keyword id="KW-0238">DNA-binding</keyword>
<keyword id="KW-0446">Lipid-binding</keyword>
<keyword id="KW-0547">Nucleotide-binding</keyword>
<gene>
    <name evidence="1" type="primary">dnaA</name>
    <name type="ordered locus">SaurJH1_0001</name>
</gene>
<proteinExistence type="inferred from homology"/>
<protein>
    <recommendedName>
        <fullName evidence="1">Chromosomal replication initiator protein DnaA</fullName>
    </recommendedName>
</protein>
<organism>
    <name type="scientific">Staphylococcus aureus (strain JH1)</name>
    <dbReference type="NCBI Taxonomy" id="359787"/>
    <lineage>
        <taxon>Bacteria</taxon>
        <taxon>Bacillati</taxon>
        <taxon>Bacillota</taxon>
        <taxon>Bacilli</taxon>
        <taxon>Bacillales</taxon>
        <taxon>Staphylococcaceae</taxon>
        <taxon>Staphylococcus</taxon>
    </lineage>
</organism>
<feature type="chain" id="PRO_1000079966" description="Chromosomal replication initiator protein DnaA">
    <location>
        <begin position="1"/>
        <end position="453"/>
    </location>
</feature>
<feature type="region of interest" description="Domain I, interacts with DnaA modulators" evidence="1">
    <location>
        <begin position="1"/>
        <end position="71"/>
    </location>
</feature>
<feature type="region of interest" description="Domain II" evidence="1">
    <location>
        <begin position="71"/>
        <end position="114"/>
    </location>
</feature>
<feature type="region of interest" description="Domain III, AAA+ region" evidence="1">
    <location>
        <begin position="115"/>
        <end position="331"/>
    </location>
</feature>
<feature type="region of interest" description="Domain IV, binds dsDNA" evidence="1">
    <location>
        <begin position="332"/>
        <end position="453"/>
    </location>
</feature>
<feature type="binding site" evidence="1">
    <location>
        <position position="159"/>
    </location>
    <ligand>
        <name>ATP</name>
        <dbReference type="ChEBI" id="CHEBI:30616"/>
    </ligand>
</feature>
<feature type="binding site" evidence="1">
    <location>
        <position position="161"/>
    </location>
    <ligand>
        <name>ATP</name>
        <dbReference type="ChEBI" id="CHEBI:30616"/>
    </ligand>
</feature>
<feature type="binding site" evidence="1">
    <location>
        <position position="162"/>
    </location>
    <ligand>
        <name>ATP</name>
        <dbReference type="ChEBI" id="CHEBI:30616"/>
    </ligand>
</feature>
<feature type="binding site" evidence="1">
    <location>
        <position position="163"/>
    </location>
    <ligand>
        <name>ATP</name>
        <dbReference type="ChEBI" id="CHEBI:30616"/>
    </ligand>
</feature>
<accession>A6TXF1</accession>
<comment type="function">
    <text evidence="1">Plays an essential role in the initiation and regulation of chromosomal replication. ATP-DnaA binds to the origin of replication (oriC) to initiate formation of the DNA replication initiation complex once per cell cycle. Binds the DnaA box (a 9 base pair repeat at the origin) and separates the double-stranded (ds)DNA. Forms a right-handed helical filament on oriC DNA; dsDNA binds to the exterior of the filament while single-stranded (ss)DNA is stabiized in the filament's interior. The ATP-DnaA-oriC complex binds and stabilizes one strand of the AT-rich DNA unwinding element (DUE), permitting loading of DNA polymerase. After initiation quickly degrades to an ADP-DnaA complex that is not apt for DNA replication. Binds acidic phospholipids.</text>
</comment>
<comment type="subunit">
    <text evidence="1">Oligomerizes as a right-handed, spiral filament on DNA at oriC.</text>
</comment>
<comment type="subcellular location">
    <subcellularLocation>
        <location evidence="1">Cytoplasm</location>
    </subcellularLocation>
</comment>
<comment type="domain">
    <text evidence="1">Domain I is involved in oligomerization and binding regulators, domain II is flexibile and of varying length in different bacteria, domain III forms the AAA+ region, while domain IV binds dsDNA.</text>
</comment>
<comment type="similarity">
    <text evidence="1">Belongs to the DnaA family.</text>
</comment>
<name>DNAA_STAA2</name>
<sequence>MSEKEIWEKVLEIAQEKLSAVSYSTFLKDTELYTIKDGEAIVLSSIPFNANWLNQQYAEIIQAILFDVVGYEVKPHFITTEELANYSNNETATPKETTKPSTETTEDNHVLGREQFNAHNTFDTFVIGPGNRFPHAASLAVAEAPAKAYNPLFIYGGVGLGKTHLMHAIGHHVLDNNPDAKVIYTSSEKFTNEFIKSIRDNEGEAFRERYRNIDVLLIDDIQFIQNKVQTQEEFFYTFNELHQNNKQIVISSDRPPKEIAQLEDRLRSRFEWGLIVDITPPDYETRMAILQKKIEEEKLDIPPEALNYIANQIQSNIRELEGALTRLLAYSQLLGKPITTELTAEALKDIIQAPKSKKITIQDIQKIVGQYYNVRIEDFSAKKRTKSIAYPRQIAMYLSRELTDFSLPKIGEEFGGRDHTTVIHAHEKISKDLKEDPIFKQEVENLEKEIRNV</sequence>